<proteinExistence type="inferred from homology"/>
<name>TPMT_METCA</name>
<reference key="1">
    <citation type="journal article" date="2004" name="PLoS Biol.">
        <title>Genomic insights into methanotrophy: the complete genome sequence of Methylococcus capsulatus (Bath).</title>
        <authorList>
            <person name="Ward N.L."/>
            <person name="Larsen O."/>
            <person name="Sakwa J."/>
            <person name="Bruseth L."/>
            <person name="Khouri H.M."/>
            <person name="Durkin A.S."/>
            <person name="Dimitrov G."/>
            <person name="Jiang L."/>
            <person name="Scanlan D."/>
            <person name="Kang K.H."/>
            <person name="Lewis M.R."/>
            <person name="Nelson K.E."/>
            <person name="Methe B.A."/>
            <person name="Wu M."/>
            <person name="Heidelberg J.F."/>
            <person name="Paulsen I.T."/>
            <person name="Fouts D.E."/>
            <person name="Ravel J."/>
            <person name="Tettelin H."/>
            <person name="Ren Q."/>
            <person name="Read T.D."/>
            <person name="DeBoy R.T."/>
            <person name="Seshadri R."/>
            <person name="Salzberg S.L."/>
            <person name="Jensen H.B."/>
            <person name="Birkeland N.K."/>
            <person name="Nelson W.C."/>
            <person name="Dodson R.J."/>
            <person name="Grindhaug S.H."/>
            <person name="Holt I.E."/>
            <person name="Eidhammer I."/>
            <person name="Jonasen I."/>
            <person name="Vanaken S."/>
            <person name="Utterback T.R."/>
            <person name="Feldblyum T.V."/>
            <person name="Fraser C.M."/>
            <person name="Lillehaug J.R."/>
            <person name="Eisen J.A."/>
        </authorList>
    </citation>
    <scope>NUCLEOTIDE SEQUENCE [LARGE SCALE GENOMIC DNA]</scope>
    <source>
        <strain>ATCC 33009 / NCIMB 11132 / Bath</strain>
    </source>
</reference>
<sequence length="222" mass="24942">MDPDFWHERWRQKQTGFHQTQVNPLLETFWPRCVGPARPRVFVPLCGKSLDMVWLRNRGHSVLGNELSPIAVDEFFRENGLSAVTTPLGNGFVRAESGDISLLCGNYFDLTPDLIGKVGAIYDRAALVAMPPEMQGRYAEQVFRLLPETPPMLLITLEYDAEEMSGPPFPVPEEAVVRLFGPAYRIELLSARDALEGNPQLRAKGLSRLTEKAYWLRAQASA</sequence>
<feature type="chain" id="PRO_0000220124" description="Thiopurine S-methyltransferase">
    <location>
        <begin position="1"/>
        <end position="222"/>
    </location>
</feature>
<feature type="binding site" evidence="1">
    <location>
        <position position="10"/>
    </location>
    <ligand>
        <name>S-adenosyl-L-methionine</name>
        <dbReference type="ChEBI" id="CHEBI:59789"/>
    </ligand>
</feature>
<feature type="binding site" evidence="1">
    <location>
        <position position="45"/>
    </location>
    <ligand>
        <name>S-adenosyl-L-methionine</name>
        <dbReference type="ChEBI" id="CHEBI:59789"/>
    </ligand>
</feature>
<feature type="binding site" evidence="1">
    <location>
        <position position="66"/>
    </location>
    <ligand>
        <name>S-adenosyl-L-methionine</name>
        <dbReference type="ChEBI" id="CHEBI:59789"/>
    </ligand>
</feature>
<feature type="binding site" evidence="1">
    <location>
        <position position="124"/>
    </location>
    <ligand>
        <name>S-adenosyl-L-methionine</name>
        <dbReference type="ChEBI" id="CHEBI:59789"/>
    </ligand>
</feature>
<dbReference type="EC" id="2.1.1.67" evidence="1"/>
<dbReference type="EMBL" id="AE017282">
    <property type="protein sequence ID" value="AAU92905.1"/>
    <property type="molecule type" value="Genomic_DNA"/>
</dbReference>
<dbReference type="RefSeq" id="WP_010960120.1">
    <property type="nucleotide sequence ID" value="NC_002977.6"/>
</dbReference>
<dbReference type="SMR" id="Q60AQ2"/>
<dbReference type="STRING" id="243233.MCA0794"/>
<dbReference type="GeneID" id="88223107"/>
<dbReference type="KEGG" id="mca:MCA0794"/>
<dbReference type="eggNOG" id="COG0500">
    <property type="taxonomic scope" value="Bacteria"/>
</dbReference>
<dbReference type="HOGENOM" id="CLU_085515_1_0_6"/>
<dbReference type="Proteomes" id="UP000006821">
    <property type="component" value="Chromosome"/>
</dbReference>
<dbReference type="GO" id="GO:0005737">
    <property type="term" value="C:cytoplasm"/>
    <property type="evidence" value="ECO:0007669"/>
    <property type="project" value="UniProtKB-SubCell"/>
</dbReference>
<dbReference type="GO" id="GO:0008119">
    <property type="term" value="F:thiopurine S-methyltransferase activity"/>
    <property type="evidence" value="ECO:0007669"/>
    <property type="project" value="UniProtKB-UniRule"/>
</dbReference>
<dbReference type="GO" id="GO:0032259">
    <property type="term" value="P:methylation"/>
    <property type="evidence" value="ECO:0007669"/>
    <property type="project" value="UniProtKB-KW"/>
</dbReference>
<dbReference type="GO" id="GO:0010038">
    <property type="term" value="P:response to metal ion"/>
    <property type="evidence" value="ECO:0007669"/>
    <property type="project" value="InterPro"/>
</dbReference>
<dbReference type="FunFam" id="3.40.50.150:FF:000101">
    <property type="entry name" value="Thiopurine S-methyltransferase"/>
    <property type="match status" value="1"/>
</dbReference>
<dbReference type="Gene3D" id="3.40.50.150">
    <property type="entry name" value="Vaccinia Virus protein VP39"/>
    <property type="match status" value="1"/>
</dbReference>
<dbReference type="HAMAP" id="MF_00812">
    <property type="entry name" value="Thiopur_methtran"/>
    <property type="match status" value="1"/>
</dbReference>
<dbReference type="InterPro" id="IPR029063">
    <property type="entry name" value="SAM-dependent_MTases_sf"/>
</dbReference>
<dbReference type="InterPro" id="IPR022474">
    <property type="entry name" value="Thiopur_S-MeTfrase_Se/Te_detox"/>
</dbReference>
<dbReference type="InterPro" id="IPR025835">
    <property type="entry name" value="Thiopurine_S-MeTrfase"/>
</dbReference>
<dbReference type="InterPro" id="IPR008854">
    <property type="entry name" value="TPMT"/>
</dbReference>
<dbReference type="NCBIfam" id="NF009732">
    <property type="entry name" value="PRK13255.1"/>
    <property type="match status" value="1"/>
</dbReference>
<dbReference type="NCBIfam" id="TIGR03840">
    <property type="entry name" value="TMPT_Se_Te"/>
    <property type="match status" value="1"/>
</dbReference>
<dbReference type="PANTHER" id="PTHR10259">
    <property type="entry name" value="THIOPURINE S-METHYLTRANSFERASE"/>
    <property type="match status" value="1"/>
</dbReference>
<dbReference type="PANTHER" id="PTHR10259:SF11">
    <property type="entry name" value="THIOPURINE S-METHYLTRANSFERASE"/>
    <property type="match status" value="1"/>
</dbReference>
<dbReference type="Pfam" id="PF05724">
    <property type="entry name" value="TPMT"/>
    <property type="match status" value="1"/>
</dbReference>
<dbReference type="PIRSF" id="PIRSF023956">
    <property type="entry name" value="Thiopurine_S-methyltransferase"/>
    <property type="match status" value="1"/>
</dbReference>
<dbReference type="SUPFAM" id="SSF53335">
    <property type="entry name" value="S-adenosyl-L-methionine-dependent methyltransferases"/>
    <property type="match status" value="1"/>
</dbReference>
<dbReference type="PROSITE" id="PS51585">
    <property type="entry name" value="SAM_MT_TPMT"/>
    <property type="match status" value="1"/>
</dbReference>
<organism>
    <name type="scientific">Methylococcus capsulatus (strain ATCC 33009 / NCIMB 11132 / Bath)</name>
    <dbReference type="NCBI Taxonomy" id="243233"/>
    <lineage>
        <taxon>Bacteria</taxon>
        <taxon>Pseudomonadati</taxon>
        <taxon>Pseudomonadota</taxon>
        <taxon>Gammaproteobacteria</taxon>
        <taxon>Methylococcales</taxon>
        <taxon>Methylococcaceae</taxon>
        <taxon>Methylococcus</taxon>
    </lineage>
</organism>
<evidence type="ECO:0000255" key="1">
    <source>
        <dbReference type="HAMAP-Rule" id="MF_00812"/>
    </source>
</evidence>
<gene>
    <name evidence="1" type="primary">tpm</name>
    <name type="ordered locus">MCA0794</name>
</gene>
<keyword id="KW-0963">Cytoplasm</keyword>
<keyword id="KW-0489">Methyltransferase</keyword>
<keyword id="KW-1185">Reference proteome</keyword>
<keyword id="KW-0949">S-adenosyl-L-methionine</keyword>
<keyword id="KW-0808">Transferase</keyword>
<protein>
    <recommendedName>
        <fullName evidence="1">Thiopurine S-methyltransferase</fullName>
        <ecNumber evidence="1">2.1.1.67</ecNumber>
    </recommendedName>
    <alternativeName>
        <fullName evidence="1">Thiopurine methyltransferase</fullName>
    </alternativeName>
</protein>
<accession>Q60AQ2</accession>
<comment type="catalytic activity">
    <reaction evidence="1">
        <text>S-adenosyl-L-methionine + a thiopurine = S-adenosyl-L-homocysteine + a thiopurine S-methylether.</text>
        <dbReference type="EC" id="2.1.1.67"/>
    </reaction>
</comment>
<comment type="subcellular location">
    <subcellularLocation>
        <location evidence="1">Cytoplasm</location>
    </subcellularLocation>
</comment>
<comment type="similarity">
    <text evidence="1">Belongs to the class I-like SAM-binding methyltransferase superfamily. TPMT family.</text>
</comment>